<gene>
    <name type="ordered locus">RBE_0584</name>
</gene>
<accession>Q1RIZ9</accession>
<feature type="chain" id="PRO_0000280804" description="Uncharacterized protein RBE_0584">
    <location>
        <begin position="1"/>
        <end position="832"/>
    </location>
</feature>
<organism>
    <name type="scientific">Rickettsia bellii (strain RML369-C)</name>
    <dbReference type="NCBI Taxonomy" id="336407"/>
    <lineage>
        <taxon>Bacteria</taxon>
        <taxon>Pseudomonadati</taxon>
        <taxon>Pseudomonadota</taxon>
        <taxon>Alphaproteobacteria</taxon>
        <taxon>Rickettsiales</taxon>
        <taxon>Rickettsiaceae</taxon>
        <taxon>Rickettsieae</taxon>
        <taxon>Rickettsia</taxon>
        <taxon>belli group</taxon>
    </lineage>
</organism>
<dbReference type="EMBL" id="CP000087">
    <property type="protein sequence ID" value="ABE04665.1"/>
    <property type="molecule type" value="Genomic_DNA"/>
</dbReference>
<dbReference type="RefSeq" id="WP_011477253.1">
    <property type="nucleotide sequence ID" value="NC_007940.1"/>
</dbReference>
<dbReference type="KEGG" id="rbe:RBE_0584"/>
<dbReference type="eggNOG" id="COG2887">
    <property type="taxonomic scope" value="Bacteria"/>
</dbReference>
<dbReference type="HOGENOM" id="CLU_337988_0_0_5"/>
<dbReference type="OrthoDB" id="9780606at2"/>
<dbReference type="Proteomes" id="UP000001951">
    <property type="component" value="Chromosome"/>
</dbReference>
<dbReference type="Gene3D" id="3.90.320.10">
    <property type="match status" value="1"/>
</dbReference>
<dbReference type="InterPro" id="IPR027417">
    <property type="entry name" value="P-loop_NTPase"/>
</dbReference>
<dbReference type="InterPro" id="IPR011604">
    <property type="entry name" value="PDDEXK-like_dom_sf"/>
</dbReference>
<dbReference type="InterPro" id="IPR038726">
    <property type="entry name" value="PDDEXK_AddAB-type"/>
</dbReference>
<dbReference type="Pfam" id="PF12705">
    <property type="entry name" value="PDDEXK_1"/>
    <property type="match status" value="1"/>
</dbReference>
<dbReference type="SUPFAM" id="SSF52540">
    <property type="entry name" value="P-loop containing nucleoside triphosphate hydrolases"/>
    <property type="match status" value="1"/>
</dbReference>
<reference key="1">
    <citation type="journal article" date="2006" name="PLoS Genet.">
        <title>Genome sequence of Rickettsia bellii illuminates the role of amoebae in gene exchanges between intracellular pathogens.</title>
        <authorList>
            <person name="Ogata H."/>
            <person name="La Scola B."/>
            <person name="Audic S."/>
            <person name="Renesto P."/>
            <person name="Blanc G."/>
            <person name="Robert C."/>
            <person name="Fournier P.-E."/>
            <person name="Claverie J.-M."/>
            <person name="Raoult D."/>
        </authorList>
    </citation>
    <scope>NUCLEOTIDE SEQUENCE [LARGE SCALE GENOMIC DNA]</scope>
    <source>
        <strain>RML369-C</strain>
    </source>
</reference>
<sequence>MISDISFLQDFAEFIVSKFGKENLRKELKIILPNSLSCTKLKGLLTDNYNVQNLPIIIPFNAIISKKDSSEDYMSKMEELFTLSKIITEYKKLDFTPEEALKAAGILNKLFADLVNNNVDIKLIETYNNSEYWQNIYKFLEYSFLKWQKNEKQSSNNYKLKLLLEEIARTKNSCKQVILAGIFKPDSFLKKYEEELQIIKYNEIKLAHNNIYYYEPTDIYEEAEQIAHICKQNADKKIAIVINNNKLKRIYCNYLDKYELVFEDLIGNDLKLTNVSSLLIAIINILCNNFDLKLLFLLLKNPLINCTNIQELELLLSGKNRFISSPKYLLQLQFDNEELKIYCYNLVDILFTTKPYNIKDILVLSKEIFEKILPDIWEKEGGAELSEFLNNLTEFSGSINVSKKDFPKIFALLLSNVKYYKNIESKIIIGSPEELALSRFDLVILPHFNSDNWSNTTTTHPYLSKEAKQILNIDYDEITPKLYSNYFDLLLQNEEVIILNAKKYAGKLSTPCNLFLKLSNKNVIPNKSVIPQLDCGISGVIFLDSTTSTQDDIEQAAHSTFFPNILSVTDIETLIRNPYGFYAKKILKLRTQDKIWEEPKISDFGNFIHKVLEEYSKNYDQQNMLDQQQALLNIGNNILHSTILPTYTKKTWQTKLTLLSKAFILFDMERRKNCQKIYFEIKGELNLNIAGQNIKIIGIADRIEISKSNCITILDYKTGTIPTKKEIELGLSPQLIIESLMILENGFNISHSYAPLCHSCESGNPIENITIAYVKITSTEPYVQTTEISLSMETLEKHKQGLIRLLEYYVKNKSFVYDLDMSKYNDYLHLRG</sequence>
<name>Y584_RICBR</name>
<protein>
    <recommendedName>
        <fullName>Uncharacterized protein RBE_0584</fullName>
    </recommendedName>
</protein>
<proteinExistence type="predicted"/>